<evidence type="ECO:0000255" key="1"/>
<evidence type="ECO:0000269" key="2">
    <source>
    </source>
</evidence>
<evidence type="ECO:0000269" key="3">
    <source>
    </source>
</evidence>
<evidence type="ECO:0000269" key="4">
    <source>
    </source>
</evidence>
<evidence type="ECO:0000269" key="5">
    <source>
    </source>
</evidence>
<evidence type="ECO:0000305" key="6"/>
<feature type="chain" id="PRO_0000222914" description="Probable diacyglycerol O-acyltransferase Tgs4">
    <location>
        <begin position="1"/>
        <end position="474"/>
    </location>
</feature>
<feature type="active site" description="Proton acceptor" evidence="1">
    <location>
        <position position="135"/>
    </location>
</feature>
<proteinExistence type="evidence at protein level"/>
<accession>P9WKC3</accession>
<accession>L0TBT5</accession>
<accession>O53305</accession>
<accession>P67208</accession>
<name>TGS4_MYCTU</name>
<gene>
    <name type="primary">tgs4</name>
    <name type="ordered locus">Rv3088</name>
    <name type="ORF">MTV013.09</name>
</gene>
<dbReference type="EC" id="2.3.1.20" evidence="3"/>
<dbReference type="EMBL" id="AL123456">
    <property type="protein sequence ID" value="CCP45897.1"/>
    <property type="molecule type" value="Genomic_DNA"/>
</dbReference>
<dbReference type="PIR" id="D70853">
    <property type="entry name" value="D70853"/>
</dbReference>
<dbReference type="RefSeq" id="NP_217604.1">
    <property type="nucleotide sequence ID" value="NC_000962.3"/>
</dbReference>
<dbReference type="RefSeq" id="WP_003416079.1">
    <property type="nucleotide sequence ID" value="NZ_NVQJ01000011.1"/>
</dbReference>
<dbReference type="SMR" id="P9WKC3"/>
<dbReference type="STRING" id="83332.Rv3088"/>
<dbReference type="SwissLipids" id="SLP:000001149"/>
<dbReference type="PaxDb" id="83332-Rv3088"/>
<dbReference type="DNASU" id="888669"/>
<dbReference type="GeneID" id="888669"/>
<dbReference type="KEGG" id="mtu:Rv3088"/>
<dbReference type="KEGG" id="mtv:RVBD_3088"/>
<dbReference type="TubercuList" id="Rv3088"/>
<dbReference type="eggNOG" id="COG1020">
    <property type="taxonomic scope" value="Bacteria"/>
</dbReference>
<dbReference type="InParanoid" id="P9WKC3"/>
<dbReference type="OrthoDB" id="4660468at2"/>
<dbReference type="PhylomeDB" id="P9WKC3"/>
<dbReference type="BRENDA" id="2.3.1.20">
    <property type="organism ID" value="3445"/>
</dbReference>
<dbReference type="UniPathway" id="UPA00282"/>
<dbReference type="Proteomes" id="UP000001584">
    <property type="component" value="Chromosome"/>
</dbReference>
<dbReference type="GO" id="GO:0005886">
    <property type="term" value="C:plasma membrane"/>
    <property type="evidence" value="ECO:0000318"/>
    <property type="project" value="GO_Central"/>
</dbReference>
<dbReference type="GO" id="GO:0004144">
    <property type="term" value="F:diacylglycerol O-acyltransferase activity"/>
    <property type="evidence" value="ECO:0000314"/>
    <property type="project" value="MTBBASE"/>
</dbReference>
<dbReference type="GO" id="GO:0008374">
    <property type="term" value="F:O-acyltransferase activity"/>
    <property type="evidence" value="ECO:0000318"/>
    <property type="project" value="GO_Central"/>
</dbReference>
<dbReference type="GO" id="GO:0051701">
    <property type="term" value="P:biological process involved in interaction with host"/>
    <property type="evidence" value="ECO:0000315"/>
    <property type="project" value="MTBBASE"/>
</dbReference>
<dbReference type="GO" id="GO:0006071">
    <property type="term" value="P:glycerol metabolic process"/>
    <property type="evidence" value="ECO:0007669"/>
    <property type="project" value="UniProtKB-KW"/>
</dbReference>
<dbReference type="GO" id="GO:0045017">
    <property type="term" value="P:glycerolipid biosynthetic process"/>
    <property type="evidence" value="ECO:0000314"/>
    <property type="project" value="MTBBASE"/>
</dbReference>
<dbReference type="GO" id="GO:0010447">
    <property type="term" value="P:response to acidic pH"/>
    <property type="evidence" value="ECO:0000270"/>
    <property type="project" value="MTBBASE"/>
</dbReference>
<dbReference type="GO" id="GO:0001666">
    <property type="term" value="P:response to hypoxia"/>
    <property type="evidence" value="ECO:0000318"/>
    <property type="project" value="GO_Central"/>
</dbReference>
<dbReference type="GO" id="GO:0071731">
    <property type="term" value="P:response to nitric oxide"/>
    <property type="evidence" value="ECO:0000270"/>
    <property type="project" value="MTBBASE"/>
</dbReference>
<dbReference type="GO" id="GO:0019432">
    <property type="term" value="P:triglyceride biosynthetic process"/>
    <property type="evidence" value="ECO:0000314"/>
    <property type="project" value="MTBBASE"/>
</dbReference>
<dbReference type="InterPro" id="IPR014292">
    <property type="entry name" value="Acyl_transf_WS/DGAT"/>
</dbReference>
<dbReference type="InterPro" id="IPR045034">
    <property type="entry name" value="O-acyltransferase_WSD1-like"/>
</dbReference>
<dbReference type="InterPro" id="IPR009721">
    <property type="entry name" value="O-acyltransferase_WSD1_C"/>
</dbReference>
<dbReference type="InterPro" id="IPR004255">
    <property type="entry name" value="O-acyltransferase_WSD1_N"/>
</dbReference>
<dbReference type="NCBIfam" id="TIGR02946">
    <property type="entry name" value="acyl_WS_DGAT"/>
    <property type="match status" value="1"/>
</dbReference>
<dbReference type="PANTHER" id="PTHR31650">
    <property type="entry name" value="O-ACYLTRANSFERASE (WSD1-LIKE) FAMILY PROTEIN"/>
    <property type="match status" value="1"/>
</dbReference>
<dbReference type="PANTHER" id="PTHR31650:SF1">
    <property type="entry name" value="WAX ESTER SYNTHASE_DIACYLGLYCEROL ACYLTRANSFERASE 4-RELATED"/>
    <property type="match status" value="1"/>
</dbReference>
<dbReference type="Pfam" id="PF06974">
    <property type="entry name" value="WS_DGAT_C"/>
    <property type="match status" value="1"/>
</dbReference>
<dbReference type="Pfam" id="PF03007">
    <property type="entry name" value="WS_DGAT_cat"/>
    <property type="match status" value="1"/>
</dbReference>
<keyword id="KW-0012">Acyltransferase</keyword>
<keyword id="KW-0319">Glycerol metabolism</keyword>
<keyword id="KW-0444">Lipid biosynthesis</keyword>
<keyword id="KW-0443">Lipid metabolism</keyword>
<keyword id="KW-1185">Reference proteome</keyword>
<keyword id="KW-0808">Transferase</keyword>
<protein>
    <recommendedName>
        <fullName>Probable diacyglycerol O-acyltransferase Tgs4</fullName>
        <shortName>TGS4</shortName>
        <ecNumber evidence="3">2.3.1.20</ecNumber>
    </recommendedName>
    <alternativeName>
        <fullName>Probable triacylglycerol synthase tgs4</fullName>
    </alternativeName>
</protein>
<organism>
    <name type="scientific">Mycobacterium tuberculosis (strain ATCC 25618 / H37Rv)</name>
    <dbReference type="NCBI Taxonomy" id="83332"/>
    <lineage>
        <taxon>Bacteria</taxon>
        <taxon>Bacillati</taxon>
        <taxon>Actinomycetota</taxon>
        <taxon>Actinomycetes</taxon>
        <taxon>Mycobacteriales</taxon>
        <taxon>Mycobacteriaceae</taxon>
        <taxon>Mycobacterium</taxon>
        <taxon>Mycobacterium tuberculosis complex</taxon>
    </lineage>
</organism>
<comment type="function">
    <text evidence="3 4">Required for maintaining the appropriate mycolic acid composition and permeability of the envelope on its exposure to acidic pH. Upon expression in E.coli functions as a triacylglycerol synthase, making triacylglycerol (TG) from diolein and long-chain fatty acyl-CoA. Has very weak wax synthase activity, incorporating palmityl alcohol into wax esters in the presence of palmitoyl-CoA.</text>
</comment>
<comment type="catalytic activity">
    <reaction evidence="3">
        <text>an acyl-CoA + a 1,2-diacyl-sn-glycerol = a triacyl-sn-glycerol + CoA</text>
        <dbReference type="Rhea" id="RHEA:10868"/>
        <dbReference type="ChEBI" id="CHEBI:17815"/>
        <dbReference type="ChEBI" id="CHEBI:57287"/>
        <dbReference type="ChEBI" id="CHEBI:58342"/>
        <dbReference type="ChEBI" id="CHEBI:64615"/>
        <dbReference type="EC" id="2.3.1.20"/>
    </reaction>
</comment>
<comment type="catalytic activity">
    <reaction evidence="3">
        <text>di-(9Z)-octadecenoylglycerol + (9Z)-octadecenoyl-CoA = 1,2,3-tri-(9Z-octadecenoyl)-glycerol + CoA</text>
        <dbReference type="Rhea" id="RHEA:45780"/>
        <dbReference type="ChEBI" id="CHEBI:53753"/>
        <dbReference type="ChEBI" id="CHEBI:57287"/>
        <dbReference type="ChEBI" id="CHEBI:57387"/>
        <dbReference type="ChEBI" id="CHEBI:75945"/>
    </reaction>
    <physiologicalReaction direction="left-to-right" evidence="3">
        <dbReference type="Rhea" id="RHEA:45781"/>
    </physiologicalReaction>
</comment>
<comment type="biophysicochemical properties">
    <phDependence>
        <text evidence="3">Optimum pH is 6.5-7.2.</text>
    </phDependence>
</comment>
<comment type="pathway">
    <text>Glycerolipid metabolism; triacylglycerol biosynthesis.</text>
</comment>
<comment type="induction">
    <text evidence="2 3">Expression is controlled by VirS. Induced at acidic pH and in macrophages. Induced by low levels of nitric oxide (NO), but not by hypoxia.</text>
</comment>
<comment type="disruption phenotype">
    <text evidence="4 5">Inactivation of the mymA operon causes altered cell wall structure, reduced contents and altered composition of mycolic acids along with the accumulation of saturated C24 and C26 fatty acids, and enhanced susceptibility to antibiotics, detergents and acidic pH. Also impairs ability to survive in macrophages.</text>
</comment>
<comment type="similarity">
    <text evidence="6">Belongs to the long-chain O-acyltransferase family.</text>
</comment>
<reference key="1">
    <citation type="journal article" date="1998" name="Nature">
        <title>Deciphering the biology of Mycobacterium tuberculosis from the complete genome sequence.</title>
        <authorList>
            <person name="Cole S.T."/>
            <person name="Brosch R."/>
            <person name="Parkhill J."/>
            <person name="Garnier T."/>
            <person name="Churcher C.M."/>
            <person name="Harris D.E."/>
            <person name="Gordon S.V."/>
            <person name="Eiglmeier K."/>
            <person name="Gas S."/>
            <person name="Barry C.E. III"/>
            <person name="Tekaia F."/>
            <person name="Badcock K."/>
            <person name="Basham D."/>
            <person name="Brown D."/>
            <person name="Chillingworth T."/>
            <person name="Connor R."/>
            <person name="Davies R.M."/>
            <person name="Devlin K."/>
            <person name="Feltwell T."/>
            <person name="Gentles S."/>
            <person name="Hamlin N."/>
            <person name="Holroyd S."/>
            <person name="Hornsby T."/>
            <person name="Jagels K."/>
            <person name="Krogh A."/>
            <person name="McLean J."/>
            <person name="Moule S."/>
            <person name="Murphy L.D."/>
            <person name="Oliver S."/>
            <person name="Osborne J."/>
            <person name="Quail M.A."/>
            <person name="Rajandream M.A."/>
            <person name="Rogers J."/>
            <person name="Rutter S."/>
            <person name="Seeger K."/>
            <person name="Skelton S."/>
            <person name="Squares S."/>
            <person name="Squares R."/>
            <person name="Sulston J.E."/>
            <person name="Taylor K."/>
            <person name="Whitehead S."/>
            <person name="Barrell B.G."/>
        </authorList>
    </citation>
    <scope>NUCLEOTIDE SEQUENCE [LARGE SCALE GENOMIC DNA]</scope>
    <source>
        <strain>ATCC 25618 / H37Rv</strain>
    </source>
</reference>
<reference key="2">
    <citation type="journal article" date="2003" name="FEMS Microbiol. Lett.">
        <title>mymA operon of Mycobacterium tuberculosis: its regulation and importance in the cell envelope.</title>
        <authorList>
            <person name="Singh A."/>
            <person name="Jain S."/>
            <person name="Gupta S."/>
            <person name="Das T."/>
            <person name="Tyagi A.K."/>
        </authorList>
    </citation>
    <scope>INDUCTION</scope>
</reference>
<reference key="3">
    <citation type="journal article" date="2004" name="J. Bacteriol.">
        <title>Induction of a novel class of diacylglycerol acyltransferases and triacylglycerol accumulation in Mycobacterium tuberculosis as it goes into a dormancy-like state in culture.</title>
        <authorList>
            <person name="Daniel J."/>
            <person name="Deb C."/>
            <person name="Dubey V.S."/>
            <person name="Sirakova T.D."/>
            <person name="Abomoelak B."/>
            <person name="Morbidoni H.R."/>
            <person name="Kolattukudy P.E."/>
        </authorList>
    </citation>
    <scope>FUNCTION IN E.COLI</scope>
    <scope>CATALYTIC ACTIVITY</scope>
    <scope>BIOPHYSICOCHEMICAL PROPERTIES</scope>
    <scope>INDUCTION BY NITRIC OXIDE</scope>
    <source>
        <strain>ATCC 25618 / H37Rv</strain>
    </source>
</reference>
<reference key="4">
    <citation type="journal article" date="2005" name="J. Bacteriol.">
        <title>Requirement of the mymA operon for appropriate cell wall ultrastructure and persistence of Mycobacterium tuberculosis in the spleens of guinea pigs.</title>
        <authorList>
            <person name="Singh A."/>
            <person name="Gupta R."/>
            <person name="Vishwakarma R.A."/>
            <person name="Narayanan P.R."/>
            <person name="Paramasivan C.N."/>
            <person name="Ramanathan V.D."/>
            <person name="Tyagi A.K."/>
        </authorList>
    </citation>
    <scope>FUNCTION</scope>
    <scope>DISRUPTION PHENOTYPE</scope>
    <source>
        <strain>Erdman</strain>
    </source>
</reference>
<reference key="5">
    <citation type="journal article" date="2007" name="Tuberculosis">
        <title>The acid-induced operon Rv3083-Rv3089 is required for growth of Mycobacterium tuberculosis in macrophages.</title>
        <authorList>
            <person name="Cheruvu M."/>
            <person name="Plikaytis B.B."/>
            <person name="Shinnick T.M."/>
        </authorList>
    </citation>
    <scope>DISRUPTION PHENOTYPE</scope>
    <source>
        <strain>ATCC 25618 / H37Rv</strain>
    </source>
</reference>
<reference key="6">
    <citation type="journal article" date="2011" name="Mol. Cell. Proteomics">
        <title>Proteogenomic analysis of Mycobacterium tuberculosis by high resolution mass spectrometry.</title>
        <authorList>
            <person name="Kelkar D.S."/>
            <person name="Kumar D."/>
            <person name="Kumar P."/>
            <person name="Balakrishnan L."/>
            <person name="Muthusamy B."/>
            <person name="Yadav A.K."/>
            <person name="Shrivastava P."/>
            <person name="Marimuthu A."/>
            <person name="Anand S."/>
            <person name="Sundaram H."/>
            <person name="Kingsbury R."/>
            <person name="Harsha H.C."/>
            <person name="Nair B."/>
            <person name="Prasad T.S."/>
            <person name="Chauhan D.S."/>
            <person name="Katoch K."/>
            <person name="Katoch V.M."/>
            <person name="Kumar P."/>
            <person name="Chaerkady R."/>
            <person name="Ramachandran S."/>
            <person name="Dash D."/>
            <person name="Pandey A."/>
        </authorList>
    </citation>
    <scope>IDENTIFICATION BY MASS SPECTROMETRY [LARGE SCALE ANALYSIS]</scope>
    <source>
        <strain>ATCC 25618 / H37Rv</strain>
    </source>
</reference>
<sequence>MTRINPIDLSFLLLERANRPNHMAAYTIFEKPKGQKSSFGPRLFDAYRHSQAAKPFNHKLKWLGTDVAAWETVEPDMGYHIRHLALPAPGSMQQFHETVSFLNTGLLDRGHPMWECYIIDGIERGRIAILLKVHHALIDGEGGLRAMRNFLSDSPDDTTLAGPWMSAQGADRPRRTPATVSRRAQLQGQLQGMIKGLTKLPSGLFGVSADAADLGAQALSLKARKASLPFTARRTLFNNTAKSAARAYGNVELPLADVKALAKATGTSVNDVVMTVIDDALHHYLAEHQASTDRPLVAFMPMSLREKSGEGGGNRVSAELVPMGAPKASPVERLKEINAATTRAKDKGRGMQTTSRQAYALLLLGSLTVADALPLLGKLPSANVVISNMKGPTEQLYLAGAPLVAFSGLPIVPPGAGLNVTFASINTALCIAIGAAPEAVHEPSRLAELMQRAFTELQTEAGTTSPTTSKSRTP</sequence>